<proteinExistence type="inferred from homology"/>
<comment type="function">
    <text evidence="1">Specifically methylates the pseudouridine at position 1915 (m3Psi1915) in 23S rRNA.</text>
</comment>
<comment type="catalytic activity">
    <reaction evidence="1">
        <text>pseudouridine(1915) in 23S rRNA + S-adenosyl-L-methionine = N(3)-methylpseudouridine(1915) in 23S rRNA + S-adenosyl-L-homocysteine + H(+)</text>
        <dbReference type="Rhea" id="RHEA:42752"/>
        <dbReference type="Rhea" id="RHEA-COMP:10221"/>
        <dbReference type="Rhea" id="RHEA-COMP:10222"/>
        <dbReference type="ChEBI" id="CHEBI:15378"/>
        <dbReference type="ChEBI" id="CHEBI:57856"/>
        <dbReference type="ChEBI" id="CHEBI:59789"/>
        <dbReference type="ChEBI" id="CHEBI:65314"/>
        <dbReference type="ChEBI" id="CHEBI:74486"/>
        <dbReference type="EC" id="2.1.1.177"/>
    </reaction>
</comment>
<comment type="subunit">
    <text evidence="1">Homodimer.</text>
</comment>
<comment type="subcellular location">
    <subcellularLocation>
        <location evidence="1">Cytoplasm</location>
    </subcellularLocation>
</comment>
<comment type="similarity">
    <text evidence="1">Belongs to the RNA methyltransferase RlmH family.</text>
</comment>
<feature type="chain" id="PRO_0000366595" description="Ribosomal RNA large subunit methyltransferase H">
    <location>
        <begin position="1"/>
        <end position="155"/>
    </location>
</feature>
<feature type="binding site" evidence="1">
    <location>
        <position position="72"/>
    </location>
    <ligand>
        <name>S-adenosyl-L-methionine</name>
        <dbReference type="ChEBI" id="CHEBI:59789"/>
    </ligand>
</feature>
<feature type="binding site" evidence="1">
    <location>
        <position position="103"/>
    </location>
    <ligand>
        <name>S-adenosyl-L-methionine</name>
        <dbReference type="ChEBI" id="CHEBI:59789"/>
    </ligand>
</feature>
<feature type="binding site" evidence="1">
    <location>
        <begin position="122"/>
        <end position="127"/>
    </location>
    <ligand>
        <name>S-adenosyl-L-methionine</name>
        <dbReference type="ChEBI" id="CHEBI:59789"/>
    </ligand>
</feature>
<keyword id="KW-0963">Cytoplasm</keyword>
<keyword id="KW-0489">Methyltransferase</keyword>
<keyword id="KW-0698">rRNA processing</keyword>
<keyword id="KW-0949">S-adenosyl-L-methionine</keyword>
<keyword id="KW-0808">Transferase</keyword>
<protein>
    <recommendedName>
        <fullName evidence="1">Ribosomal RNA large subunit methyltransferase H</fullName>
        <ecNumber evidence="1">2.1.1.177</ecNumber>
    </recommendedName>
    <alternativeName>
        <fullName evidence="1">23S rRNA (pseudouridine1915-N3)-methyltransferase</fullName>
    </alternativeName>
    <alternativeName>
        <fullName evidence="1">23S rRNA m3Psi1915 methyltransferase</fullName>
    </alternativeName>
    <alternativeName>
        <fullName evidence="1">rRNA (pseudouridine-N3-)-methyltransferase RlmH</fullName>
    </alternativeName>
</protein>
<sequence length="155" mass="17341">MKLQLVAVGTKMPDWVQTGFTEYLRRFPKDMPFELIEIPAGKRGKNADIKRILDKEGEQMLAAAGKNRIVTLDIPGKPWDTPQLAAELERWKLDGRDVSLLIGGPEGLSPACKAAAEQSWSLSALTLPHPLVRVLVAESLYRAWSITTNHPYHRE</sequence>
<organism>
    <name type="scientific">Escherichia coli O157:H7 (strain EC4115 / EHEC)</name>
    <dbReference type="NCBI Taxonomy" id="444450"/>
    <lineage>
        <taxon>Bacteria</taxon>
        <taxon>Pseudomonadati</taxon>
        <taxon>Pseudomonadota</taxon>
        <taxon>Gammaproteobacteria</taxon>
        <taxon>Enterobacterales</taxon>
        <taxon>Enterobacteriaceae</taxon>
        <taxon>Escherichia</taxon>
    </lineage>
</organism>
<evidence type="ECO:0000255" key="1">
    <source>
        <dbReference type="HAMAP-Rule" id="MF_00658"/>
    </source>
</evidence>
<reference key="1">
    <citation type="journal article" date="2011" name="Proc. Natl. Acad. Sci. U.S.A.">
        <title>Genomic anatomy of Escherichia coli O157:H7 outbreaks.</title>
        <authorList>
            <person name="Eppinger M."/>
            <person name="Mammel M.K."/>
            <person name="Leclerc J.E."/>
            <person name="Ravel J."/>
            <person name="Cebula T.A."/>
        </authorList>
    </citation>
    <scope>NUCLEOTIDE SEQUENCE [LARGE SCALE GENOMIC DNA]</scope>
    <source>
        <strain>EC4115 / EHEC</strain>
    </source>
</reference>
<dbReference type="EC" id="2.1.1.177" evidence="1"/>
<dbReference type="EMBL" id="CP001164">
    <property type="protein sequence ID" value="ACI37492.1"/>
    <property type="molecule type" value="Genomic_DNA"/>
</dbReference>
<dbReference type="RefSeq" id="WP_000776104.1">
    <property type="nucleotide sequence ID" value="NC_011353.1"/>
</dbReference>
<dbReference type="SMR" id="B5YQI8"/>
<dbReference type="GeneID" id="93776846"/>
<dbReference type="KEGG" id="ecf:ECH74115_0725"/>
<dbReference type="HOGENOM" id="CLU_100552_1_0_6"/>
<dbReference type="GO" id="GO:0005737">
    <property type="term" value="C:cytoplasm"/>
    <property type="evidence" value="ECO:0007669"/>
    <property type="project" value="UniProtKB-SubCell"/>
</dbReference>
<dbReference type="GO" id="GO:0070038">
    <property type="term" value="F:rRNA (pseudouridine-N3-)-methyltransferase activity"/>
    <property type="evidence" value="ECO:0007669"/>
    <property type="project" value="UniProtKB-UniRule"/>
</dbReference>
<dbReference type="CDD" id="cd18081">
    <property type="entry name" value="RlmH-like"/>
    <property type="match status" value="1"/>
</dbReference>
<dbReference type="FunFam" id="3.40.1280.10:FF:000004">
    <property type="entry name" value="Ribosomal RNA large subunit methyltransferase H"/>
    <property type="match status" value="1"/>
</dbReference>
<dbReference type="Gene3D" id="3.40.1280.10">
    <property type="match status" value="1"/>
</dbReference>
<dbReference type="HAMAP" id="MF_00658">
    <property type="entry name" value="23SrRNA_methyltr_H"/>
    <property type="match status" value="1"/>
</dbReference>
<dbReference type="InterPro" id="IPR029028">
    <property type="entry name" value="Alpha/beta_knot_MTases"/>
</dbReference>
<dbReference type="InterPro" id="IPR003742">
    <property type="entry name" value="RlmH-like"/>
</dbReference>
<dbReference type="InterPro" id="IPR029026">
    <property type="entry name" value="tRNA_m1G_MTases_N"/>
</dbReference>
<dbReference type="NCBIfam" id="NF000984">
    <property type="entry name" value="PRK00103.1-1"/>
    <property type="match status" value="1"/>
</dbReference>
<dbReference type="NCBIfam" id="NF000986">
    <property type="entry name" value="PRK00103.1-4"/>
    <property type="match status" value="1"/>
</dbReference>
<dbReference type="NCBIfam" id="TIGR00246">
    <property type="entry name" value="tRNA_RlmH_YbeA"/>
    <property type="match status" value="1"/>
</dbReference>
<dbReference type="PANTHER" id="PTHR33603">
    <property type="entry name" value="METHYLTRANSFERASE"/>
    <property type="match status" value="1"/>
</dbReference>
<dbReference type="PANTHER" id="PTHR33603:SF1">
    <property type="entry name" value="RIBOSOMAL RNA LARGE SUBUNIT METHYLTRANSFERASE H"/>
    <property type="match status" value="1"/>
</dbReference>
<dbReference type="Pfam" id="PF02590">
    <property type="entry name" value="SPOUT_MTase"/>
    <property type="match status" value="1"/>
</dbReference>
<dbReference type="PIRSF" id="PIRSF004505">
    <property type="entry name" value="MT_bac"/>
    <property type="match status" value="1"/>
</dbReference>
<dbReference type="SUPFAM" id="SSF75217">
    <property type="entry name" value="alpha/beta knot"/>
    <property type="match status" value="1"/>
</dbReference>
<name>RLMH_ECO5E</name>
<gene>
    <name evidence="1" type="primary">rlmH</name>
    <name type="ordered locus">ECH74115_0725</name>
</gene>
<accession>B5YQI8</accession>